<organism>
    <name type="scientific">Spinacia oleracea</name>
    <name type="common">Spinach</name>
    <dbReference type="NCBI Taxonomy" id="3562"/>
    <lineage>
        <taxon>Eukaryota</taxon>
        <taxon>Viridiplantae</taxon>
        <taxon>Streptophyta</taxon>
        <taxon>Embryophyta</taxon>
        <taxon>Tracheophyta</taxon>
        <taxon>Spermatophyta</taxon>
        <taxon>Magnoliopsida</taxon>
        <taxon>eudicotyledons</taxon>
        <taxon>Gunneridae</taxon>
        <taxon>Pentapetalae</taxon>
        <taxon>Caryophyllales</taxon>
        <taxon>Chenopodiaceae</taxon>
        <taxon>Chenopodioideae</taxon>
        <taxon>Anserineae</taxon>
        <taxon>Spinacia</taxon>
    </lineage>
</organism>
<dbReference type="EC" id="3.6.4.13"/>
<dbReference type="EMBL" id="X99937">
    <property type="protein sequence ID" value="CAA68193.1"/>
    <property type="molecule type" value="mRNA"/>
</dbReference>
<dbReference type="PIR" id="T09159">
    <property type="entry name" value="T09159"/>
</dbReference>
<dbReference type="SMR" id="Q41382"/>
<dbReference type="Proteomes" id="UP001155700">
    <property type="component" value="Unplaced"/>
</dbReference>
<dbReference type="GO" id="GO:0005730">
    <property type="term" value="C:nucleolus"/>
    <property type="evidence" value="ECO:0000318"/>
    <property type="project" value="GO_Central"/>
</dbReference>
<dbReference type="GO" id="GO:0005524">
    <property type="term" value="F:ATP binding"/>
    <property type="evidence" value="ECO:0007669"/>
    <property type="project" value="UniProtKB-KW"/>
</dbReference>
<dbReference type="GO" id="GO:0016887">
    <property type="term" value="F:ATP hydrolysis activity"/>
    <property type="evidence" value="ECO:0007669"/>
    <property type="project" value="RHEA"/>
</dbReference>
<dbReference type="GO" id="GO:0003729">
    <property type="term" value="F:mRNA binding"/>
    <property type="evidence" value="ECO:0000318"/>
    <property type="project" value="GO_Central"/>
</dbReference>
<dbReference type="GO" id="GO:0003724">
    <property type="term" value="F:RNA helicase activity"/>
    <property type="evidence" value="ECO:0000318"/>
    <property type="project" value="GO_Central"/>
</dbReference>
<dbReference type="CDD" id="cd00268">
    <property type="entry name" value="DEADc"/>
    <property type="match status" value="1"/>
</dbReference>
<dbReference type="CDD" id="cd12937">
    <property type="entry name" value="GUCT_RH7_like"/>
    <property type="match status" value="1"/>
</dbReference>
<dbReference type="CDD" id="cd18787">
    <property type="entry name" value="SF2_C_DEAD"/>
    <property type="match status" value="1"/>
</dbReference>
<dbReference type="Gene3D" id="3.30.70.2280">
    <property type="match status" value="1"/>
</dbReference>
<dbReference type="Gene3D" id="3.40.50.300">
    <property type="entry name" value="P-loop containing nucleotide triphosphate hydrolases"/>
    <property type="match status" value="2"/>
</dbReference>
<dbReference type="InterPro" id="IPR011545">
    <property type="entry name" value="DEAD/DEAH_box_helicase_dom"/>
</dbReference>
<dbReference type="InterPro" id="IPR050547">
    <property type="entry name" value="DEAD_box_RNA_helicases"/>
</dbReference>
<dbReference type="InterPro" id="IPR012562">
    <property type="entry name" value="GUCT"/>
</dbReference>
<dbReference type="InterPro" id="IPR014001">
    <property type="entry name" value="Helicase_ATP-bd"/>
</dbReference>
<dbReference type="InterPro" id="IPR001650">
    <property type="entry name" value="Helicase_C-like"/>
</dbReference>
<dbReference type="InterPro" id="IPR027417">
    <property type="entry name" value="P-loop_NTPase"/>
</dbReference>
<dbReference type="InterPro" id="IPR035979">
    <property type="entry name" value="RBD_domain_sf"/>
</dbReference>
<dbReference type="InterPro" id="IPR000629">
    <property type="entry name" value="RNA-helicase_DEAD-box_CS"/>
</dbReference>
<dbReference type="PANTHER" id="PTHR47963:SF8">
    <property type="entry name" value="ATP-DEPENDENT RNA HELICASE DEAD"/>
    <property type="match status" value="1"/>
</dbReference>
<dbReference type="PANTHER" id="PTHR47963">
    <property type="entry name" value="DEAD-BOX ATP-DEPENDENT RNA HELICASE 47, MITOCHONDRIAL"/>
    <property type="match status" value="1"/>
</dbReference>
<dbReference type="Pfam" id="PF00270">
    <property type="entry name" value="DEAD"/>
    <property type="match status" value="1"/>
</dbReference>
<dbReference type="Pfam" id="PF08152">
    <property type="entry name" value="GUCT"/>
    <property type="match status" value="1"/>
</dbReference>
<dbReference type="Pfam" id="PF00271">
    <property type="entry name" value="Helicase_C"/>
    <property type="match status" value="1"/>
</dbReference>
<dbReference type="SMART" id="SM00487">
    <property type="entry name" value="DEXDc"/>
    <property type="match status" value="1"/>
</dbReference>
<dbReference type="SMART" id="SM00490">
    <property type="entry name" value="HELICc"/>
    <property type="match status" value="1"/>
</dbReference>
<dbReference type="SUPFAM" id="SSF52540">
    <property type="entry name" value="P-loop containing nucleoside triphosphate hydrolases"/>
    <property type="match status" value="2"/>
</dbReference>
<dbReference type="SUPFAM" id="SSF54928">
    <property type="entry name" value="RNA-binding domain, RBD"/>
    <property type="match status" value="1"/>
</dbReference>
<dbReference type="PROSITE" id="PS00039">
    <property type="entry name" value="DEAD_ATP_HELICASE"/>
    <property type="match status" value="1"/>
</dbReference>
<dbReference type="PROSITE" id="PS51192">
    <property type="entry name" value="HELICASE_ATP_BIND_1"/>
    <property type="match status" value="1"/>
</dbReference>
<dbReference type="PROSITE" id="PS51194">
    <property type="entry name" value="HELICASE_CTER"/>
    <property type="match status" value="1"/>
</dbReference>
<dbReference type="PROSITE" id="PS51195">
    <property type="entry name" value="Q_MOTIF"/>
    <property type="match status" value="1"/>
</dbReference>
<protein>
    <recommendedName>
        <fullName>DEAD-box ATP-dependent RNA helicase 7</fullName>
        <ecNumber>3.6.4.13</ecNumber>
    </recommendedName>
</protein>
<comment type="catalytic activity">
    <reaction>
        <text>ATP + H2O = ADP + phosphate + H(+)</text>
        <dbReference type="Rhea" id="RHEA:13065"/>
        <dbReference type="ChEBI" id="CHEBI:15377"/>
        <dbReference type="ChEBI" id="CHEBI:15378"/>
        <dbReference type="ChEBI" id="CHEBI:30616"/>
        <dbReference type="ChEBI" id="CHEBI:43474"/>
        <dbReference type="ChEBI" id="CHEBI:456216"/>
        <dbReference type="EC" id="3.6.4.13"/>
    </reaction>
</comment>
<comment type="subcellular location">
    <subcellularLocation>
        <location evidence="4">Nucleus</location>
    </subcellularLocation>
</comment>
<comment type="developmental stage">
    <text evidence="4">Mainly expressed in young and rapidly developing tissues.</text>
</comment>
<comment type="domain">
    <text>The Q motif is unique to and characteristic of the DEAD box family of RNA helicases and controls ATP binding and hydrolysis.</text>
</comment>
<comment type="similarity">
    <text evidence="5">Belongs to the DEAD box helicase family. DDX21/DDX50 subfamily.</text>
</comment>
<gene>
    <name type="primary">RH7</name>
    <name type="synonym">PRH75</name>
</gene>
<proteinExistence type="evidence at transcript level"/>
<sequence length="685" mass="73085">MPSISMMSDAITPETLKKEKKMKSETLDSDDTVVKKEKSSSKKKEKSSSSGKKDKEEKEKKKKRKAVDLDDSSDKSDNSSELVQADDLKPKKAKVMEEAVVEAEDPNSLSNFRISKPLKDVLISKGIKALFPIQAMTFDNVIDGCDLVGRARTGQGKTLAFVLPIVESLVNGRTKDLRRSGHGRLPSVLVLLPTRELATQVLADFQVYGGAVGLTACSVYGGAPFHSQISSLTRGVDIVVGTPGRVKDLLEKGVLKLGSLLFRVLDEADEMLKMGFVDDVELILGKVDHVSKVQTLLFSATLPSWVKQISTRFLKSAKKTVDLVSDQKMKASISVRHIVIPCSASARPDLIPDIIRCYGSGGRSIIFTETKESASQLAGLLTGARPLHGDIQQTQREVTLKGFRTGKFMTLVATNVAARGLDINDVQLIIQCEPPRDVEDYIHRSGRTGRAGNTGVAVMLYDPKRSSVTKIERESGVKFEHLSAPQPVDVAKAVGIEAAAAILQISDSVIPAFKDAAEELLSTSGLSAVDILSKALAKAAGYSDIKERSLLTGMEGYVTLLLDAGRPFYGQSFAYTVLKRFLPATKADSIMGVALTADKSGAVFDVPVDDLETFLVGAENAAGVNLDVVKALPPLEEKVQISRRFGGGGRGGRGGGYGGRGGGYGGGGYGGGGGYGGRGGGYGRR</sequence>
<accession>Q41382</accession>
<keyword id="KW-0067">ATP-binding</keyword>
<keyword id="KW-0347">Helicase</keyword>
<keyword id="KW-0378">Hydrolase</keyword>
<keyword id="KW-0547">Nucleotide-binding</keyword>
<keyword id="KW-0539">Nucleus</keyword>
<keyword id="KW-1185">Reference proteome</keyword>
<keyword id="KW-0694">RNA-binding</keyword>
<reference key="1">
    <citation type="journal article" date="1997" name="Mol. Cell. Biol.">
        <title>PRH 75, a new nuclear-localized member of the DEAD-box protein family from higher plants.</title>
        <authorList>
            <person name="Lorkovic Z.J."/>
            <person name="Herrmann R.G."/>
            <person name="Oelmueller R."/>
        </authorList>
    </citation>
    <scope>NUCLEOTIDE SEQUENCE [MRNA]</scope>
    <scope>DEVELOPMENTAL STAGE</scope>
    <scope>SUBCELLULAR LOCATION</scope>
    <source>
        <tissue>Seedling</tissue>
    </source>
</reference>
<name>RH7_SPIOL</name>
<feature type="chain" id="PRO_0000239149" description="DEAD-box ATP-dependent RNA helicase 7">
    <location>
        <begin position="1"/>
        <end position="685"/>
    </location>
</feature>
<feature type="domain" description="Helicase ATP-binding" evidence="1">
    <location>
        <begin position="138"/>
        <end position="320"/>
    </location>
</feature>
<feature type="domain" description="Helicase C-terminal" evidence="2">
    <location>
        <begin position="349"/>
        <end position="491"/>
    </location>
</feature>
<feature type="region of interest" description="Disordered" evidence="3">
    <location>
        <begin position="1"/>
        <end position="89"/>
    </location>
</feature>
<feature type="short sequence motif" description="Q motif">
    <location>
        <begin position="107"/>
        <end position="135"/>
    </location>
</feature>
<feature type="short sequence motif" description="DEAD box">
    <location>
        <begin position="266"/>
        <end position="269"/>
    </location>
</feature>
<feature type="compositionally biased region" description="Basic and acidic residues" evidence="3">
    <location>
        <begin position="22"/>
        <end position="42"/>
    </location>
</feature>
<feature type="compositionally biased region" description="Basic and acidic residues" evidence="3">
    <location>
        <begin position="66"/>
        <end position="78"/>
    </location>
</feature>
<feature type="binding site" evidence="1">
    <location>
        <begin position="151"/>
        <end position="158"/>
    </location>
    <ligand>
        <name>ATP</name>
        <dbReference type="ChEBI" id="CHEBI:30616"/>
    </ligand>
</feature>
<evidence type="ECO:0000255" key="1">
    <source>
        <dbReference type="PROSITE-ProRule" id="PRU00541"/>
    </source>
</evidence>
<evidence type="ECO:0000255" key="2">
    <source>
        <dbReference type="PROSITE-ProRule" id="PRU00542"/>
    </source>
</evidence>
<evidence type="ECO:0000256" key="3">
    <source>
        <dbReference type="SAM" id="MobiDB-lite"/>
    </source>
</evidence>
<evidence type="ECO:0000269" key="4">
    <source>
    </source>
</evidence>
<evidence type="ECO:0000305" key="5"/>